<reference key="1">
    <citation type="journal article" date="2008" name="BMC Genomics">
        <title>Genomics of an extreme psychrophile, Psychromonas ingrahamii.</title>
        <authorList>
            <person name="Riley M."/>
            <person name="Staley J.T."/>
            <person name="Danchin A."/>
            <person name="Wang T.Z."/>
            <person name="Brettin T.S."/>
            <person name="Hauser L.J."/>
            <person name="Land M.L."/>
            <person name="Thompson L.S."/>
        </authorList>
    </citation>
    <scope>NUCLEOTIDE SEQUENCE [LARGE SCALE GENOMIC DNA]</scope>
    <source>
        <strain>DSM 17664 / CCUG 51855 / 37</strain>
    </source>
</reference>
<gene>
    <name evidence="1" type="primary">rpmF</name>
    <name type="ordered locus">Ping_1085</name>
</gene>
<protein>
    <recommendedName>
        <fullName evidence="1">Large ribosomal subunit protein bL32</fullName>
    </recommendedName>
    <alternativeName>
        <fullName evidence="3">50S ribosomal protein L32</fullName>
    </alternativeName>
</protein>
<comment type="similarity">
    <text evidence="1">Belongs to the bacterial ribosomal protein bL32 family.</text>
</comment>
<feature type="chain" id="PRO_0000296538" description="Large ribosomal subunit protein bL32">
    <location>
        <begin position="1"/>
        <end position="57"/>
    </location>
</feature>
<feature type="region of interest" description="Disordered" evidence="2">
    <location>
        <begin position="1"/>
        <end position="45"/>
    </location>
</feature>
<feature type="compositionally biased region" description="Basic residues" evidence="2">
    <location>
        <begin position="1"/>
        <end position="16"/>
    </location>
</feature>
<accession>A1STV9</accession>
<name>RL32_PSYIN</name>
<proteinExistence type="inferred from homology"/>
<keyword id="KW-1185">Reference proteome</keyword>
<keyword id="KW-0687">Ribonucleoprotein</keyword>
<keyword id="KW-0689">Ribosomal protein</keyword>
<sequence length="57" mass="6463">MAVQKSRKTRSKRGMRRSHDALTAPAQLSVDATSGETHRRHHMTADGFYRGKKVIEL</sequence>
<dbReference type="EMBL" id="CP000510">
    <property type="protein sequence ID" value="ABM02924.1"/>
    <property type="molecule type" value="Genomic_DNA"/>
</dbReference>
<dbReference type="RefSeq" id="WP_011769487.1">
    <property type="nucleotide sequence ID" value="NC_008709.1"/>
</dbReference>
<dbReference type="SMR" id="A1STV9"/>
<dbReference type="STRING" id="357804.Ping_1085"/>
<dbReference type="KEGG" id="pin:Ping_1085"/>
<dbReference type="eggNOG" id="COG0333">
    <property type="taxonomic scope" value="Bacteria"/>
</dbReference>
<dbReference type="HOGENOM" id="CLU_129084_2_1_6"/>
<dbReference type="OrthoDB" id="9801927at2"/>
<dbReference type="Proteomes" id="UP000000639">
    <property type="component" value="Chromosome"/>
</dbReference>
<dbReference type="GO" id="GO:0015934">
    <property type="term" value="C:large ribosomal subunit"/>
    <property type="evidence" value="ECO:0007669"/>
    <property type="project" value="InterPro"/>
</dbReference>
<dbReference type="GO" id="GO:0003735">
    <property type="term" value="F:structural constituent of ribosome"/>
    <property type="evidence" value="ECO:0007669"/>
    <property type="project" value="InterPro"/>
</dbReference>
<dbReference type="GO" id="GO:0006412">
    <property type="term" value="P:translation"/>
    <property type="evidence" value="ECO:0007669"/>
    <property type="project" value="UniProtKB-UniRule"/>
</dbReference>
<dbReference type="HAMAP" id="MF_00340">
    <property type="entry name" value="Ribosomal_bL32"/>
    <property type="match status" value="1"/>
</dbReference>
<dbReference type="InterPro" id="IPR002677">
    <property type="entry name" value="Ribosomal_bL32"/>
</dbReference>
<dbReference type="InterPro" id="IPR044957">
    <property type="entry name" value="Ribosomal_bL32_bact"/>
</dbReference>
<dbReference type="InterPro" id="IPR011332">
    <property type="entry name" value="Ribosomal_zn-bd"/>
</dbReference>
<dbReference type="NCBIfam" id="TIGR01031">
    <property type="entry name" value="rpmF_bact"/>
    <property type="match status" value="1"/>
</dbReference>
<dbReference type="PANTHER" id="PTHR35534">
    <property type="entry name" value="50S RIBOSOMAL PROTEIN L32"/>
    <property type="match status" value="1"/>
</dbReference>
<dbReference type="PANTHER" id="PTHR35534:SF1">
    <property type="entry name" value="LARGE RIBOSOMAL SUBUNIT PROTEIN BL32"/>
    <property type="match status" value="1"/>
</dbReference>
<dbReference type="Pfam" id="PF01783">
    <property type="entry name" value="Ribosomal_L32p"/>
    <property type="match status" value="1"/>
</dbReference>
<dbReference type="SUPFAM" id="SSF57829">
    <property type="entry name" value="Zn-binding ribosomal proteins"/>
    <property type="match status" value="1"/>
</dbReference>
<organism>
    <name type="scientific">Psychromonas ingrahamii (strain DSM 17664 / CCUG 51855 / 37)</name>
    <dbReference type="NCBI Taxonomy" id="357804"/>
    <lineage>
        <taxon>Bacteria</taxon>
        <taxon>Pseudomonadati</taxon>
        <taxon>Pseudomonadota</taxon>
        <taxon>Gammaproteobacteria</taxon>
        <taxon>Alteromonadales</taxon>
        <taxon>Psychromonadaceae</taxon>
        <taxon>Psychromonas</taxon>
    </lineage>
</organism>
<evidence type="ECO:0000255" key="1">
    <source>
        <dbReference type="HAMAP-Rule" id="MF_00340"/>
    </source>
</evidence>
<evidence type="ECO:0000256" key="2">
    <source>
        <dbReference type="SAM" id="MobiDB-lite"/>
    </source>
</evidence>
<evidence type="ECO:0000305" key="3"/>